<feature type="chain" id="PRO_1000061354" description="Ureidoglycolate lyase">
    <location>
        <begin position="1"/>
        <end position="160"/>
    </location>
</feature>
<accession>Q0TKD6</accession>
<sequence>MKLQVLPLSQEAFSAYGDVIETQKRDFFHINNGLVERYHDLALVEILEQDRTLISINRAQPANLPLTIHELERHPLGTQAFIPMKGEVFVVVVALGDDKPDLSTLRAFITNGEQGVNYHRNVWHHPLFAWQRVTDFLTIDRGGSDNCDVESIPEQELCFA</sequence>
<evidence type="ECO:0000255" key="1">
    <source>
        <dbReference type="HAMAP-Rule" id="MF_00616"/>
    </source>
</evidence>
<proteinExistence type="inferred from homology"/>
<protein>
    <recommendedName>
        <fullName evidence="1">Ureidoglycolate lyase</fullName>
        <ecNumber evidence="1">4.3.2.3</ecNumber>
    </recommendedName>
    <alternativeName>
        <fullName evidence="1">Ureidoglycolatase</fullName>
    </alternativeName>
</protein>
<organism>
    <name type="scientific">Escherichia coli O6:K15:H31 (strain 536 / UPEC)</name>
    <dbReference type="NCBI Taxonomy" id="362663"/>
    <lineage>
        <taxon>Bacteria</taxon>
        <taxon>Pseudomonadati</taxon>
        <taxon>Pseudomonadota</taxon>
        <taxon>Gammaproteobacteria</taxon>
        <taxon>Enterobacterales</taxon>
        <taxon>Enterobacteriaceae</taxon>
        <taxon>Escherichia</taxon>
    </lineage>
</organism>
<dbReference type="EC" id="4.3.2.3" evidence="1"/>
<dbReference type="EMBL" id="CP000247">
    <property type="protein sequence ID" value="ABG68595.1"/>
    <property type="molecule type" value="Genomic_DNA"/>
</dbReference>
<dbReference type="RefSeq" id="WP_000776372.1">
    <property type="nucleotide sequence ID" value="NC_008253.1"/>
</dbReference>
<dbReference type="SMR" id="Q0TKD6"/>
<dbReference type="KEGG" id="ecp:ECP_0566"/>
<dbReference type="HOGENOM" id="CLU_070848_1_1_6"/>
<dbReference type="UniPathway" id="UPA00395"/>
<dbReference type="Proteomes" id="UP000009182">
    <property type="component" value="Chromosome"/>
</dbReference>
<dbReference type="GO" id="GO:0004848">
    <property type="term" value="F:ureidoglycolate hydrolase activity"/>
    <property type="evidence" value="ECO:0007669"/>
    <property type="project" value="InterPro"/>
</dbReference>
<dbReference type="GO" id="GO:0050385">
    <property type="term" value="F:ureidoglycolate lyase activity"/>
    <property type="evidence" value="ECO:0007669"/>
    <property type="project" value="UniProtKB-UniRule"/>
</dbReference>
<dbReference type="GO" id="GO:0000256">
    <property type="term" value="P:allantoin catabolic process"/>
    <property type="evidence" value="ECO:0007669"/>
    <property type="project" value="UniProtKB-UniRule"/>
</dbReference>
<dbReference type="GO" id="GO:0006145">
    <property type="term" value="P:purine nucleobase catabolic process"/>
    <property type="evidence" value="ECO:0007669"/>
    <property type="project" value="UniProtKB-UniRule"/>
</dbReference>
<dbReference type="CDD" id="cd20298">
    <property type="entry name" value="cupin_UAH"/>
    <property type="match status" value="1"/>
</dbReference>
<dbReference type="FunFam" id="2.60.120.480:FF:000001">
    <property type="entry name" value="Ureidoglycolate lyase"/>
    <property type="match status" value="1"/>
</dbReference>
<dbReference type="Gene3D" id="2.60.120.480">
    <property type="entry name" value="Ureidoglycolate hydrolase"/>
    <property type="match status" value="1"/>
</dbReference>
<dbReference type="HAMAP" id="MF_00616">
    <property type="entry name" value="Ureidogly_lyase"/>
    <property type="match status" value="1"/>
</dbReference>
<dbReference type="InterPro" id="IPR011051">
    <property type="entry name" value="RmlC_Cupin_sf"/>
</dbReference>
<dbReference type="InterPro" id="IPR047233">
    <property type="entry name" value="UAH_cupin"/>
</dbReference>
<dbReference type="InterPro" id="IPR007247">
    <property type="entry name" value="Ureidogly_lyase"/>
</dbReference>
<dbReference type="InterPro" id="IPR023525">
    <property type="entry name" value="Ureidogly_lyase_bac"/>
</dbReference>
<dbReference type="InterPro" id="IPR024060">
    <property type="entry name" value="Ureidoglycolate_lyase_dom_sf"/>
</dbReference>
<dbReference type="NCBIfam" id="NF002948">
    <property type="entry name" value="PRK03606.1-1"/>
    <property type="match status" value="1"/>
</dbReference>
<dbReference type="NCBIfam" id="NF009932">
    <property type="entry name" value="PRK13395.1"/>
    <property type="match status" value="1"/>
</dbReference>
<dbReference type="PANTHER" id="PTHR21221">
    <property type="entry name" value="UREIDOGLYCOLATE HYDROLASE"/>
    <property type="match status" value="1"/>
</dbReference>
<dbReference type="PANTHER" id="PTHR21221:SF1">
    <property type="entry name" value="UREIDOGLYCOLATE LYASE"/>
    <property type="match status" value="1"/>
</dbReference>
<dbReference type="Pfam" id="PF04115">
    <property type="entry name" value="Ureidogly_lyase"/>
    <property type="match status" value="1"/>
</dbReference>
<dbReference type="PIRSF" id="PIRSF017306">
    <property type="entry name" value="Ureidogly_hydro"/>
    <property type="match status" value="1"/>
</dbReference>
<dbReference type="SUPFAM" id="SSF51182">
    <property type="entry name" value="RmlC-like cupins"/>
    <property type="match status" value="1"/>
</dbReference>
<name>ALLA_ECOL5</name>
<keyword id="KW-0456">Lyase</keyword>
<keyword id="KW-0659">Purine metabolism</keyword>
<gene>
    <name evidence="1" type="primary">allA</name>
    <name type="ordered locus">ECP_0566</name>
</gene>
<comment type="function">
    <text evidence="1">Catalyzes the catabolism of the allantoin degradation intermediate (S)-ureidoglycolate, generating urea and glyoxylate. Involved in the anaerobic utilization of allantoin as sole nitrogen source. Reinforces the induction of genes involved in the degradation of allantoin and glyoxylate by producing glyoxylate.</text>
</comment>
<comment type="catalytic activity">
    <reaction evidence="1">
        <text>(S)-ureidoglycolate = urea + glyoxylate</text>
        <dbReference type="Rhea" id="RHEA:11304"/>
        <dbReference type="ChEBI" id="CHEBI:16199"/>
        <dbReference type="ChEBI" id="CHEBI:36655"/>
        <dbReference type="ChEBI" id="CHEBI:57296"/>
        <dbReference type="EC" id="4.3.2.3"/>
    </reaction>
</comment>
<comment type="cofactor">
    <cofactor evidence="1">
        <name>Ni(2+)</name>
        <dbReference type="ChEBI" id="CHEBI:49786"/>
    </cofactor>
</comment>
<comment type="pathway">
    <text evidence="1">Nitrogen metabolism; (S)-allantoin degradation.</text>
</comment>
<comment type="subunit">
    <text evidence="1">Homodimer.</text>
</comment>
<comment type="similarity">
    <text evidence="1">Belongs to the ureidoglycolate lyase family.</text>
</comment>
<reference key="1">
    <citation type="journal article" date="2006" name="Mol. Microbiol.">
        <title>Role of pathogenicity island-associated integrases in the genome plasticity of uropathogenic Escherichia coli strain 536.</title>
        <authorList>
            <person name="Hochhut B."/>
            <person name="Wilde C."/>
            <person name="Balling G."/>
            <person name="Middendorf B."/>
            <person name="Dobrindt U."/>
            <person name="Brzuszkiewicz E."/>
            <person name="Gottschalk G."/>
            <person name="Carniel E."/>
            <person name="Hacker J."/>
        </authorList>
    </citation>
    <scope>NUCLEOTIDE SEQUENCE [LARGE SCALE GENOMIC DNA]</scope>
    <source>
        <strain>536 / UPEC</strain>
    </source>
</reference>